<dbReference type="EC" id="2.8.1.13" evidence="1"/>
<dbReference type="EMBL" id="CP000030">
    <property type="protein sequence ID" value="AAV86418.1"/>
    <property type="molecule type" value="Genomic_DNA"/>
</dbReference>
<dbReference type="SMR" id="Q5PBB1"/>
<dbReference type="KEGG" id="ama:AM335"/>
<dbReference type="HOGENOM" id="CLU_035188_0_0_5"/>
<dbReference type="GO" id="GO:0005737">
    <property type="term" value="C:cytoplasm"/>
    <property type="evidence" value="ECO:0007669"/>
    <property type="project" value="UniProtKB-SubCell"/>
</dbReference>
<dbReference type="GO" id="GO:0005524">
    <property type="term" value="F:ATP binding"/>
    <property type="evidence" value="ECO:0007669"/>
    <property type="project" value="UniProtKB-KW"/>
</dbReference>
<dbReference type="GO" id="GO:0000049">
    <property type="term" value="F:tRNA binding"/>
    <property type="evidence" value="ECO:0007669"/>
    <property type="project" value="UniProtKB-KW"/>
</dbReference>
<dbReference type="GO" id="GO:0103016">
    <property type="term" value="F:tRNA-uridine 2-sulfurtransferase activity"/>
    <property type="evidence" value="ECO:0007669"/>
    <property type="project" value="UniProtKB-EC"/>
</dbReference>
<dbReference type="GO" id="GO:0002143">
    <property type="term" value="P:tRNA wobble position uridine thiolation"/>
    <property type="evidence" value="ECO:0007669"/>
    <property type="project" value="TreeGrafter"/>
</dbReference>
<dbReference type="CDD" id="cd01998">
    <property type="entry name" value="MnmA_TRMU-like"/>
    <property type="match status" value="1"/>
</dbReference>
<dbReference type="FunFam" id="2.30.30.280:FF:000001">
    <property type="entry name" value="tRNA-specific 2-thiouridylase MnmA"/>
    <property type="match status" value="1"/>
</dbReference>
<dbReference type="FunFam" id="3.40.50.620:FF:000115">
    <property type="entry name" value="tRNA-specific 2-thiouridylase MnmA"/>
    <property type="match status" value="1"/>
</dbReference>
<dbReference type="Gene3D" id="2.30.30.280">
    <property type="entry name" value="Adenine nucleotide alpha hydrolases-like domains"/>
    <property type="match status" value="1"/>
</dbReference>
<dbReference type="Gene3D" id="3.40.50.620">
    <property type="entry name" value="HUPs"/>
    <property type="match status" value="1"/>
</dbReference>
<dbReference type="Gene3D" id="2.40.30.10">
    <property type="entry name" value="Translation factors"/>
    <property type="match status" value="1"/>
</dbReference>
<dbReference type="HAMAP" id="MF_00144">
    <property type="entry name" value="tRNA_thiouridyl_MnmA"/>
    <property type="match status" value="1"/>
</dbReference>
<dbReference type="InterPro" id="IPR004506">
    <property type="entry name" value="MnmA-like"/>
</dbReference>
<dbReference type="InterPro" id="IPR046885">
    <property type="entry name" value="MnmA-like_C"/>
</dbReference>
<dbReference type="InterPro" id="IPR046884">
    <property type="entry name" value="MnmA-like_central"/>
</dbReference>
<dbReference type="InterPro" id="IPR023382">
    <property type="entry name" value="MnmA-like_central_sf"/>
</dbReference>
<dbReference type="InterPro" id="IPR014729">
    <property type="entry name" value="Rossmann-like_a/b/a_fold"/>
</dbReference>
<dbReference type="NCBIfam" id="NF001138">
    <property type="entry name" value="PRK00143.1"/>
    <property type="match status" value="1"/>
</dbReference>
<dbReference type="NCBIfam" id="TIGR00420">
    <property type="entry name" value="trmU"/>
    <property type="match status" value="1"/>
</dbReference>
<dbReference type="PANTHER" id="PTHR11933:SF5">
    <property type="entry name" value="MITOCHONDRIAL TRNA-SPECIFIC 2-THIOURIDYLASE 1"/>
    <property type="match status" value="1"/>
</dbReference>
<dbReference type="PANTHER" id="PTHR11933">
    <property type="entry name" value="TRNA 5-METHYLAMINOMETHYL-2-THIOURIDYLATE -METHYLTRANSFERASE"/>
    <property type="match status" value="1"/>
</dbReference>
<dbReference type="Pfam" id="PF03054">
    <property type="entry name" value="tRNA_Me_trans"/>
    <property type="match status" value="1"/>
</dbReference>
<dbReference type="Pfam" id="PF20258">
    <property type="entry name" value="tRNA_Me_trans_C"/>
    <property type="match status" value="1"/>
</dbReference>
<dbReference type="Pfam" id="PF20259">
    <property type="entry name" value="tRNA_Me_trans_M"/>
    <property type="match status" value="1"/>
</dbReference>
<dbReference type="SUPFAM" id="SSF52402">
    <property type="entry name" value="Adenine nucleotide alpha hydrolases-like"/>
    <property type="match status" value="1"/>
</dbReference>
<protein>
    <recommendedName>
        <fullName evidence="1">tRNA-specific 2-thiouridylase MnmA</fullName>
        <ecNumber evidence="1">2.8.1.13</ecNumber>
    </recommendedName>
</protein>
<keyword id="KW-0067">ATP-binding</keyword>
<keyword id="KW-0963">Cytoplasm</keyword>
<keyword id="KW-1015">Disulfide bond</keyword>
<keyword id="KW-0547">Nucleotide-binding</keyword>
<keyword id="KW-0694">RNA-binding</keyword>
<keyword id="KW-0808">Transferase</keyword>
<keyword id="KW-0819">tRNA processing</keyword>
<keyword id="KW-0820">tRNA-binding</keyword>
<comment type="function">
    <text evidence="1">Catalyzes the 2-thiolation of uridine at the wobble position (U34) of tRNA, leading to the formation of s(2)U34.</text>
</comment>
<comment type="catalytic activity">
    <reaction evidence="1">
        <text>S-sulfanyl-L-cysteinyl-[protein] + uridine(34) in tRNA + AH2 + ATP = 2-thiouridine(34) in tRNA + L-cysteinyl-[protein] + A + AMP + diphosphate + H(+)</text>
        <dbReference type="Rhea" id="RHEA:47032"/>
        <dbReference type="Rhea" id="RHEA-COMP:10131"/>
        <dbReference type="Rhea" id="RHEA-COMP:11726"/>
        <dbReference type="Rhea" id="RHEA-COMP:11727"/>
        <dbReference type="Rhea" id="RHEA-COMP:11728"/>
        <dbReference type="ChEBI" id="CHEBI:13193"/>
        <dbReference type="ChEBI" id="CHEBI:15378"/>
        <dbReference type="ChEBI" id="CHEBI:17499"/>
        <dbReference type="ChEBI" id="CHEBI:29950"/>
        <dbReference type="ChEBI" id="CHEBI:30616"/>
        <dbReference type="ChEBI" id="CHEBI:33019"/>
        <dbReference type="ChEBI" id="CHEBI:61963"/>
        <dbReference type="ChEBI" id="CHEBI:65315"/>
        <dbReference type="ChEBI" id="CHEBI:87170"/>
        <dbReference type="ChEBI" id="CHEBI:456215"/>
        <dbReference type="EC" id="2.8.1.13"/>
    </reaction>
</comment>
<comment type="subcellular location">
    <subcellularLocation>
        <location evidence="1">Cytoplasm</location>
    </subcellularLocation>
</comment>
<comment type="similarity">
    <text evidence="1">Belongs to the MnmA/TRMU family.</text>
</comment>
<reference key="1">
    <citation type="journal article" date="2005" name="Proc. Natl. Acad. Sci. U.S.A.">
        <title>Complete genome sequencing of Anaplasma marginale reveals that the surface is skewed to two superfamilies of outer membrane proteins.</title>
        <authorList>
            <person name="Brayton K.A."/>
            <person name="Kappmeyer L.S."/>
            <person name="Herndon D.R."/>
            <person name="Dark M.J."/>
            <person name="Tibbals D.L."/>
            <person name="Palmer G.H."/>
            <person name="McGuire T.C."/>
            <person name="Knowles D.P. Jr."/>
        </authorList>
    </citation>
    <scope>NUCLEOTIDE SEQUENCE [LARGE SCALE GENOMIC DNA]</scope>
    <source>
        <strain>St. Maries</strain>
    </source>
</reference>
<accession>Q5PBB1</accession>
<organism>
    <name type="scientific">Anaplasma marginale (strain St. Maries)</name>
    <dbReference type="NCBI Taxonomy" id="234826"/>
    <lineage>
        <taxon>Bacteria</taxon>
        <taxon>Pseudomonadati</taxon>
        <taxon>Pseudomonadota</taxon>
        <taxon>Alphaproteobacteria</taxon>
        <taxon>Rickettsiales</taxon>
        <taxon>Anaplasmataceae</taxon>
        <taxon>Anaplasma</taxon>
    </lineage>
</organism>
<gene>
    <name evidence="1" type="primary">mnmA</name>
    <name type="ordered locus">AM335</name>
</gene>
<evidence type="ECO:0000255" key="1">
    <source>
        <dbReference type="HAMAP-Rule" id="MF_00144"/>
    </source>
</evidence>
<name>MNMA_ANAMM</name>
<sequence length="387" mass="42337">MQFIPSPAMVFDGSLNLDPLVSGKPPEETTVVVAMSGGVDSSVVAALLHERGYKVIGATMQLHSSSPASGAKSCCGSVDIYDAKRVASTLGFPHYVLDYEEVFRREVIDDFINSYKRGETPIPCVKCNQTVKFRDMLKAARAIGGDVVATGHYVRRVEIAGEQQILRGKDPQKDQSYFLFSVTSEQLKFLRFPLGDLAKSNVRLLAQQLNLEVADKPDSQDICFVPENSYREVLRNLDPASVKKGKIVHVDGRLLGEHDGISNFTVGQRRGLNISAPYPLYVVRLDAAQNTVVVGPQSALMKRALFVKNLNWLPDYNIPKRGLAVDARLRSSGATVRATITSDGDGYGTVVLEEDCVVSPGQACVLYDKERLLGGGWIYNKLCHEGA</sequence>
<proteinExistence type="inferred from homology"/>
<feature type="chain" id="PRO_0000349512" description="tRNA-specific 2-thiouridylase MnmA">
    <location>
        <begin position="1"/>
        <end position="387"/>
    </location>
</feature>
<feature type="region of interest" description="Interaction with tRNA" evidence="1">
    <location>
        <begin position="173"/>
        <end position="175"/>
    </location>
</feature>
<feature type="active site" description="Nucleophile" evidence="1">
    <location>
        <position position="127"/>
    </location>
</feature>
<feature type="active site" description="Cysteine persulfide intermediate" evidence="1">
    <location>
        <position position="223"/>
    </location>
</feature>
<feature type="binding site" evidence="1">
    <location>
        <begin position="34"/>
        <end position="41"/>
    </location>
    <ligand>
        <name>ATP</name>
        <dbReference type="ChEBI" id="CHEBI:30616"/>
    </ligand>
</feature>
<feature type="binding site" evidence="1">
    <location>
        <position position="60"/>
    </location>
    <ligand>
        <name>ATP</name>
        <dbReference type="ChEBI" id="CHEBI:30616"/>
    </ligand>
</feature>
<feature type="binding site" evidence="1">
    <location>
        <position position="151"/>
    </location>
    <ligand>
        <name>ATP</name>
        <dbReference type="ChEBI" id="CHEBI:30616"/>
    </ligand>
</feature>
<feature type="site" description="Interaction with tRNA" evidence="1">
    <location>
        <position position="152"/>
    </location>
</feature>
<feature type="site" description="Interaction with tRNA" evidence="1">
    <location>
        <position position="362"/>
    </location>
</feature>
<feature type="disulfide bond" description="Alternate" evidence="1">
    <location>
        <begin position="127"/>
        <end position="223"/>
    </location>
</feature>